<gene>
    <name evidence="3" type="primary">mddA1</name>
    <name evidence="5" type="ordered locus">blr1218</name>
</gene>
<reference key="1">
    <citation type="journal article" date="2002" name="DNA Res.">
        <title>Complete genomic sequence of nitrogen-fixing symbiotic bacterium Bradyrhizobium japonicum USDA110.</title>
        <authorList>
            <person name="Kaneko T."/>
            <person name="Nakamura Y."/>
            <person name="Sato S."/>
            <person name="Minamisawa K."/>
            <person name="Uchiumi T."/>
            <person name="Sasamoto S."/>
            <person name="Watanabe A."/>
            <person name="Idesawa K."/>
            <person name="Iriguchi M."/>
            <person name="Kawashima K."/>
            <person name="Kohara M."/>
            <person name="Matsumoto M."/>
            <person name="Shimpo S."/>
            <person name="Tsuruoka H."/>
            <person name="Wada T."/>
            <person name="Yamada M."/>
            <person name="Tabata S."/>
        </authorList>
    </citation>
    <scope>NUCLEOTIDE SEQUENCE [LARGE SCALE GENOMIC DNA]</scope>
    <source>
        <strain evidence="6">JCM 10833 / BCRC 13528 / IAM 13628 / NBRC 14792 / USDA 110</strain>
    </source>
</reference>
<reference key="2">
    <citation type="journal article" date="2015" name="Nat. Commun.">
        <title>A novel pathway producing dimethylsulphide in bacteria is widespread in soil environments.</title>
        <authorList>
            <person name="Carrion O."/>
            <person name="Curson A.R."/>
            <person name="Kumaresan D."/>
            <person name="Fu Y."/>
            <person name="Lang A.S."/>
            <person name="Mercade E."/>
            <person name="Todd J.D."/>
        </authorList>
    </citation>
    <scope>FUNCTION</scope>
    <scope>CATALYTIC ACTIVITY</scope>
    <source>
        <strain>JCM 10833 / BCRC 13528 / IAM 13628 / NBRC 14792 / USDA 110</strain>
    </source>
</reference>
<feature type="chain" id="PRO_0000444500" description="Methanethiol S-methyltransferase 1">
    <location>
        <begin position="1"/>
        <end position="285"/>
    </location>
</feature>
<feature type="transmembrane region" description="Helical" evidence="1">
    <location>
        <begin position="55"/>
        <end position="75"/>
    </location>
</feature>
<feature type="transmembrane region" description="Helical" evidence="1">
    <location>
        <begin position="88"/>
        <end position="108"/>
    </location>
</feature>
<feature type="transmembrane region" description="Helical" evidence="1">
    <location>
        <begin position="132"/>
        <end position="152"/>
    </location>
</feature>
<feature type="transmembrane region" description="Helical" evidence="1">
    <location>
        <begin position="162"/>
        <end position="182"/>
    </location>
</feature>
<feature type="transmembrane region" description="Helical" evidence="1">
    <location>
        <begin position="224"/>
        <end position="244"/>
    </location>
</feature>
<sequence>MERPIRHGAKTKQCRCLGTTELSMSQIDHQVHSIGPEVTGSRIFKFIAFLYGIAAYLVFFVTILYAIGFVMGLVVPKTIDTGTDTSTAEAVIINLLLMALFAVQHSVMARQRFKTWWTQFVSKPIERSTYVLFASLSLLLLFWQWRPLPTVIWEVEDPDLAVTLVTVSFAGWVLVFTSTFIINHFELFGLHQVTNHLVGKEATPPRFKTPLLYKFVRHPIYLGFIVAFWAAPVMTAGHLLFAAVTTIYIFVGIALEERDLIDLFGDEYRQYKQRVSMLIPWRRSV</sequence>
<protein>
    <recommendedName>
        <fullName evidence="3">Methanethiol S-methyltransferase 1</fullName>
        <ecNumber evidence="2">2.1.1.334</ecNumber>
    </recommendedName>
</protein>
<comment type="function">
    <text evidence="2">Catalyzes the methylation of methanethiol (MeSH) to yield dimethylsulphide (DMS).</text>
</comment>
<comment type="catalytic activity">
    <reaction evidence="2">
        <text>methanethiol + S-adenosyl-L-methionine = dimethyl sulfide + S-adenosyl-L-homocysteine + H(+)</text>
        <dbReference type="Rhea" id="RHEA:50428"/>
        <dbReference type="ChEBI" id="CHEBI:15378"/>
        <dbReference type="ChEBI" id="CHEBI:16007"/>
        <dbReference type="ChEBI" id="CHEBI:17437"/>
        <dbReference type="ChEBI" id="CHEBI:57856"/>
        <dbReference type="ChEBI" id="CHEBI:59789"/>
        <dbReference type="EC" id="2.1.1.334"/>
    </reaction>
</comment>
<comment type="subcellular location">
    <subcellularLocation>
        <location evidence="1">Membrane</location>
        <topology evidence="1">Multi-pass membrane protein</topology>
    </subcellularLocation>
</comment>
<comment type="similarity">
    <text evidence="4">Belongs to the nurim family.</text>
</comment>
<evidence type="ECO:0000255" key="1"/>
<evidence type="ECO:0000269" key="2">
    <source>
    </source>
</evidence>
<evidence type="ECO:0000303" key="3">
    <source>
    </source>
</evidence>
<evidence type="ECO:0000305" key="4"/>
<evidence type="ECO:0000312" key="5">
    <source>
        <dbReference type="EMBL" id="BAC46483.1"/>
    </source>
</evidence>
<evidence type="ECO:0000312" key="6">
    <source>
        <dbReference type="Proteomes" id="UP000002526"/>
    </source>
</evidence>
<proteinExistence type="evidence at protein level"/>
<organism>
    <name type="scientific">Bradyrhizobium diazoefficiens (strain JCM 10833 / BCRC 13528 / IAM 13628 / NBRC 14792 / USDA 110)</name>
    <dbReference type="NCBI Taxonomy" id="224911"/>
    <lineage>
        <taxon>Bacteria</taxon>
        <taxon>Pseudomonadati</taxon>
        <taxon>Pseudomonadota</taxon>
        <taxon>Alphaproteobacteria</taxon>
        <taxon>Hyphomicrobiales</taxon>
        <taxon>Nitrobacteraceae</taxon>
        <taxon>Bradyrhizobium</taxon>
    </lineage>
</organism>
<name>MDDA1_BRADU</name>
<dbReference type="EC" id="2.1.1.334" evidence="2"/>
<dbReference type="EMBL" id="BA000040">
    <property type="protein sequence ID" value="BAC46483.1"/>
    <property type="molecule type" value="Genomic_DNA"/>
</dbReference>
<dbReference type="RefSeq" id="NP_767858.1">
    <property type="nucleotide sequence ID" value="NC_004463.1"/>
</dbReference>
<dbReference type="STRING" id="224911.AAV28_02975"/>
<dbReference type="EnsemblBacteria" id="BAC46483">
    <property type="protein sequence ID" value="BAC46483"/>
    <property type="gene ID" value="BAC46483"/>
</dbReference>
<dbReference type="KEGG" id="bja:blr1218"/>
<dbReference type="PATRIC" id="fig|224911.5.peg.1263"/>
<dbReference type="eggNOG" id="COG2020">
    <property type="taxonomic scope" value="Bacteria"/>
</dbReference>
<dbReference type="HOGENOM" id="CLU_084189_0_0_5"/>
<dbReference type="InParanoid" id="Q89V40"/>
<dbReference type="OrthoDB" id="9789029at2"/>
<dbReference type="PhylomeDB" id="Q89V40"/>
<dbReference type="BRENDA" id="2.1.1.334">
    <property type="organism ID" value="14426"/>
</dbReference>
<dbReference type="Proteomes" id="UP000002526">
    <property type="component" value="Chromosome"/>
</dbReference>
<dbReference type="GO" id="GO:0016020">
    <property type="term" value="C:membrane"/>
    <property type="evidence" value="ECO:0007669"/>
    <property type="project" value="UniProtKB-SubCell"/>
</dbReference>
<dbReference type="GO" id="GO:0008168">
    <property type="term" value="F:methyltransferase activity"/>
    <property type="evidence" value="ECO:0007669"/>
    <property type="project" value="UniProtKB-KW"/>
</dbReference>
<dbReference type="GO" id="GO:0032259">
    <property type="term" value="P:methylation"/>
    <property type="evidence" value="ECO:0007669"/>
    <property type="project" value="UniProtKB-KW"/>
</dbReference>
<dbReference type="Gene3D" id="1.20.120.1630">
    <property type="match status" value="1"/>
</dbReference>
<dbReference type="InterPro" id="IPR054700">
    <property type="entry name" value="MddA"/>
</dbReference>
<dbReference type="InterPro" id="IPR009915">
    <property type="entry name" value="NnrU_dom"/>
</dbReference>
<dbReference type="InterPro" id="IPR033580">
    <property type="entry name" value="Nurim-like"/>
</dbReference>
<dbReference type="NCBIfam" id="NF045656">
    <property type="entry name" value="MeththiolMtaseMddA"/>
    <property type="match status" value="1"/>
</dbReference>
<dbReference type="PANTHER" id="PTHR31040">
    <property type="entry name" value="NURIM"/>
    <property type="match status" value="1"/>
</dbReference>
<dbReference type="PANTHER" id="PTHR31040:SF1">
    <property type="entry name" value="NURIM"/>
    <property type="match status" value="1"/>
</dbReference>
<dbReference type="Pfam" id="PF07298">
    <property type="entry name" value="NnrU"/>
    <property type="match status" value="1"/>
</dbReference>
<keyword id="KW-0472">Membrane</keyword>
<keyword id="KW-0489">Methyltransferase</keyword>
<keyword id="KW-1185">Reference proteome</keyword>
<keyword id="KW-0949">S-adenosyl-L-methionine</keyword>
<keyword id="KW-0808">Transferase</keyword>
<keyword id="KW-0812">Transmembrane</keyword>
<keyword id="KW-1133">Transmembrane helix</keyword>
<accession>Q89V40</accession>